<sequence length="101" mass="11608">MAKKSMIAREVKRQKLNGRYEKKRAELKSLIKGVETPDEQREAAIVALQKLPRDSAATRQRNRCQLTGRPHGFYRKFGLGRNKLRECVMRGEVPGVVKASW</sequence>
<gene>
    <name evidence="1" type="primary">rpsN</name>
    <name type="ordered locus">MCA2359</name>
</gene>
<name>RS14_METCA</name>
<accession>Q605C5</accession>
<protein>
    <recommendedName>
        <fullName evidence="1">Small ribosomal subunit protein uS14</fullName>
    </recommendedName>
    <alternativeName>
        <fullName evidence="2">30S ribosomal protein S14</fullName>
    </alternativeName>
</protein>
<dbReference type="EMBL" id="AE017282">
    <property type="protein sequence ID" value="AAU91476.1"/>
    <property type="molecule type" value="Genomic_DNA"/>
</dbReference>
<dbReference type="RefSeq" id="WP_010961587.1">
    <property type="nucleotide sequence ID" value="NC_002977.6"/>
</dbReference>
<dbReference type="SMR" id="Q605C5"/>
<dbReference type="STRING" id="243233.MCA2359"/>
<dbReference type="GeneID" id="88224561"/>
<dbReference type="KEGG" id="mca:MCA2359"/>
<dbReference type="eggNOG" id="COG0199">
    <property type="taxonomic scope" value="Bacteria"/>
</dbReference>
<dbReference type="HOGENOM" id="CLU_139869_0_1_6"/>
<dbReference type="Proteomes" id="UP000006821">
    <property type="component" value="Chromosome"/>
</dbReference>
<dbReference type="GO" id="GO:0005737">
    <property type="term" value="C:cytoplasm"/>
    <property type="evidence" value="ECO:0007669"/>
    <property type="project" value="UniProtKB-ARBA"/>
</dbReference>
<dbReference type="GO" id="GO:0015935">
    <property type="term" value="C:small ribosomal subunit"/>
    <property type="evidence" value="ECO:0007669"/>
    <property type="project" value="TreeGrafter"/>
</dbReference>
<dbReference type="GO" id="GO:0019843">
    <property type="term" value="F:rRNA binding"/>
    <property type="evidence" value="ECO:0007669"/>
    <property type="project" value="UniProtKB-UniRule"/>
</dbReference>
<dbReference type="GO" id="GO:0003735">
    <property type="term" value="F:structural constituent of ribosome"/>
    <property type="evidence" value="ECO:0007669"/>
    <property type="project" value="InterPro"/>
</dbReference>
<dbReference type="GO" id="GO:0006412">
    <property type="term" value="P:translation"/>
    <property type="evidence" value="ECO:0007669"/>
    <property type="project" value="UniProtKB-UniRule"/>
</dbReference>
<dbReference type="FunFam" id="1.10.287.1480:FF:000001">
    <property type="entry name" value="30S ribosomal protein S14"/>
    <property type="match status" value="1"/>
</dbReference>
<dbReference type="Gene3D" id="1.10.287.1480">
    <property type="match status" value="1"/>
</dbReference>
<dbReference type="HAMAP" id="MF_00537">
    <property type="entry name" value="Ribosomal_uS14_1"/>
    <property type="match status" value="1"/>
</dbReference>
<dbReference type="InterPro" id="IPR001209">
    <property type="entry name" value="Ribosomal_uS14"/>
</dbReference>
<dbReference type="InterPro" id="IPR023036">
    <property type="entry name" value="Ribosomal_uS14_bac/plastid"/>
</dbReference>
<dbReference type="NCBIfam" id="NF006477">
    <property type="entry name" value="PRK08881.1"/>
    <property type="match status" value="1"/>
</dbReference>
<dbReference type="PANTHER" id="PTHR19836">
    <property type="entry name" value="30S RIBOSOMAL PROTEIN S14"/>
    <property type="match status" value="1"/>
</dbReference>
<dbReference type="PANTHER" id="PTHR19836:SF19">
    <property type="entry name" value="SMALL RIBOSOMAL SUBUNIT PROTEIN US14M"/>
    <property type="match status" value="1"/>
</dbReference>
<dbReference type="Pfam" id="PF00253">
    <property type="entry name" value="Ribosomal_S14"/>
    <property type="match status" value="1"/>
</dbReference>
<dbReference type="SUPFAM" id="SSF57716">
    <property type="entry name" value="Glucocorticoid receptor-like (DNA-binding domain)"/>
    <property type="match status" value="1"/>
</dbReference>
<proteinExistence type="inferred from homology"/>
<evidence type="ECO:0000255" key="1">
    <source>
        <dbReference type="HAMAP-Rule" id="MF_00537"/>
    </source>
</evidence>
<evidence type="ECO:0000305" key="2"/>
<reference key="1">
    <citation type="journal article" date="2004" name="PLoS Biol.">
        <title>Genomic insights into methanotrophy: the complete genome sequence of Methylococcus capsulatus (Bath).</title>
        <authorList>
            <person name="Ward N.L."/>
            <person name="Larsen O."/>
            <person name="Sakwa J."/>
            <person name="Bruseth L."/>
            <person name="Khouri H.M."/>
            <person name="Durkin A.S."/>
            <person name="Dimitrov G."/>
            <person name="Jiang L."/>
            <person name="Scanlan D."/>
            <person name="Kang K.H."/>
            <person name="Lewis M.R."/>
            <person name="Nelson K.E."/>
            <person name="Methe B.A."/>
            <person name="Wu M."/>
            <person name="Heidelberg J.F."/>
            <person name="Paulsen I.T."/>
            <person name="Fouts D.E."/>
            <person name="Ravel J."/>
            <person name="Tettelin H."/>
            <person name="Ren Q."/>
            <person name="Read T.D."/>
            <person name="DeBoy R.T."/>
            <person name="Seshadri R."/>
            <person name="Salzberg S.L."/>
            <person name="Jensen H.B."/>
            <person name="Birkeland N.K."/>
            <person name="Nelson W.C."/>
            <person name="Dodson R.J."/>
            <person name="Grindhaug S.H."/>
            <person name="Holt I.E."/>
            <person name="Eidhammer I."/>
            <person name="Jonasen I."/>
            <person name="Vanaken S."/>
            <person name="Utterback T.R."/>
            <person name="Feldblyum T.V."/>
            <person name="Fraser C.M."/>
            <person name="Lillehaug J.R."/>
            <person name="Eisen J.A."/>
        </authorList>
    </citation>
    <scope>NUCLEOTIDE SEQUENCE [LARGE SCALE GENOMIC DNA]</scope>
    <source>
        <strain>ATCC 33009 / NCIMB 11132 / Bath</strain>
    </source>
</reference>
<keyword id="KW-1185">Reference proteome</keyword>
<keyword id="KW-0687">Ribonucleoprotein</keyword>
<keyword id="KW-0689">Ribosomal protein</keyword>
<keyword id="KW-0694">RNA-binding</keyword>
<keyword id="KW-0699">rRNA-binding</keyword>
<feature type="chain" id="PRO_1000128444" description="Small ribosomal subunit protein uS14">
    <location>
        <begin position="1"/>
        <end position="101"/>
    </location>
</feature>
<organism>
    <name type="scientific">Methylococcus capsulatus (strain ATCC 33009 / NCIMB 11132 / Bath)</name>
    <dbReference type="NCBI Taxonomy" id="243233"/>
    <lineage>
        <taxon>Bacteria</taxon>
        <taxon>Pseudomonadati</taxon>
        <taxon>Pseudomonadota</taxon>
        <taxon>Gammaproteobacteria</taxon>
        <taxon>Methylococcales</taxon>
        <taxon>Methylococcaceae</taxon>
        <taxon>Methylococcus</taxon>
    </lineage>
</organism>
<comment type="function">
    <text evidence="1">Binds 16S rRNA, required for the assembly of 30S particles and may also be responsible for determining the conformation of the 16S rRNA at the A site.</text>
</comment>
<comment type="subunit">
    <text evidence="1">Part of the 30S ribosomal subunit. Contacts proteins S3 and S10.</text>
</comment>
<comment type="similarity">
    <text evidence="1">Belongs to the universal ribosomal protein uS14 family.</text>
</comment>